<proteinExistence type="evidence at protein level"/>
<keyword id="KW-0119">Carbohydrate metabolism</keyword>
<keyword id="KW-0216">Detoxification</keyword>
<keyword id="KW-0456">Lyase</keyword>
<keyword id="KW-0554">One-carbon metabolism</keyword>
<keyword id="KW-1185">Reference proteome</keyword>
<evidence type="ECO:0000305" key="1"/>
<comment type="function">
    <text>Catalyzes the condensation of ribulose 5-phosphate with formaldehyde to form 3-hexulose 6-phosphate. Together with HxlB, may act as a formaldehyde detoxification system.</text>
</comment>
<comment type="catalytic activity">
    <reaction>
        <text>D-ribulose 5-phosphate + formaldehyde = D-arabino-hex-3-ulose 6-phosphate</text>
        <dbReference type="Rhea" id="RHEA:25201"/>
        <dbReference type="ChEBI" id="CHEBI:16842"/>
        <dbReference type="ChEBI" id="CHEBI:58121"/>
        <dbReference type="ChEBI" id="CHEBI:58542"/>
        <dbReference type="EC" id="4.1.2.43"/>
    </reaction>
</comment>
<comment type="pathway">
    <text>One-carbon metabolism; formaldehyde assimilation via RuMP pathway; D-fructose 6-phosphate from D-ribulose 5-phosphate and formaldehyde: step 1/2.</text>
</comment>
<comment type="induction">
    <text>By formaldehyde, under the control of HxlR. Not induced by methanol, formate, or methylamine.</text>
</comment>
<comment type="similarity">
    <text evidence="1">Belongs to the HPS/KGPDC family. HPS subfamily.</text>
</comment>
<protein>
    <recommendedName>
        <fullName>3-hexulose-6-phosphate synthase</fullName>
        <shortName>HPS</shortName>
        <ecNumber>4.1.2.43</ecNumber>
    </recommendedName>
    <alternativeName>
        <fullName>D-arabino-3-hexulose-6-phosphate formaldehyde lyase</fullName>
    </alternativeName>
    <alternativeName>
        <fullName>HUMPS</fullName>
    </alternativeName>
</protein>
<reference key="1">
    <citation type="journal article" date="1995" name="Microbiology">
        <title>A 10 kb nucleotide sequence at the 5' flanking region (32 degrees) of srfAA of the Bacillus subtilis chromosome.</title>
        <authorList>
            <person name="Fujishima Y."/>
            <person name="Yamane K."/>
        </authorList>
    </citation>
    <scope>NUCLEOTIDE SEQUENCE [GENOMIC DNA]</scope>
    <source>
        <strain>168</strain>
    </source>
</reference>
<reference key="2">
    <citation type="journal article" date="1996" name="Microbiology">
        <title>The 25 degrees-36 degrees region of the Bacillus subtilis chromosome: determination of the sequence of a 146 kb segment and identification of 113 genes.</title>
        <authorList>
            <person name="Yamane K."/>
            <person name="Kumano M."/>
            <person name="Kurita K."/>
        </authorList>
    </citation>
    <scope>NUCLEOTIDE SEQUENCE [GENOMIC DNA]</scope>
    <source>
        <strain>168</strain>
    </source>
</reference>
<reference key="3">
    <citation type="journal article" date="1997" name="Nature">
        <title>The complete genome sequence of the Gram-positive bacterium Bacillus subtilis.</title>
        <authorList>
            <person name="Kunst F."/>
            <person name="Ogasawara N."/>
            <person name="Moszer I."/>
            <person name="Albertini A.M."/>
            <person name="Alloni G."/>
            <person name="Azevedo V."/>
            <person name="Bertero M.G."/>
            <person name="Bessieres P."/>
            <person name="Bolotin A."/>
            <person name="Borchert S."/>
            <person name="Borriss R."/>
            <person name="Boursier L."/>
            <person name="Brans A."/>
            <person name="Braun M."/>
            <person name="Brignell S.C."/>
            <person name="Bron S."/>
            <person name="Brouillet S."/>
            <person name="Bruschi C.V."/>
            <person name="Caldwell B."/>
            <person name="Capuano V."/>
            <person name="Carter N.M."/>
            <person name="Choi S.-K."/>
            <person name="Codani J.-J."/>
            <person name="Connerton I.F."/>
            <person name="Cummings N.J."/>
            <person name="Daniel R.A."/>
            <person name="Denizot F."/>
            <person name="Devine K.M."/>
            <person name="Duesterhoeft A."/>
            <person name="Ehrlich S.D."/>
            <person name="Emmerson P.T."/>
            <person name="Entian K.-D."/>
            <person name="Errington J."/>
            <person name="Fabret C."/>
            <person name="Ferrari E."/>
            <person name="Foulger D."/>
            <person name="Fritz C."/>
            <person name="Fujita M."/>
            <person name="Fujita Y."/>
            <person name="Fuma S."/>
            <person name="Galizzi A."/>
            <person name="Galleron N."/>
            <person name="Ghim S.-Y."/>
            <person name="Glaser P."/>
            <person name="Goffeau A."/>
            <person name="Golightly E.J."/>
            <person name="Grandi G."/>
            <person name="Guiseppi G."/>
            <person name="Guy B.J."/>
            <person name="Haga K."/>
            <person name="Haiech J."/>
            <person name="Harwood C.R."/>
            <person name="Henaut A."/>
            <person name="Hilbert H."/>
            <person name="Holsappel S."/>
            <person name="Hosono S."/>
            <person name="Hullo M.-F."/>
            <person name="Itaya M."/>
            <person name="Jones L.-M."/>
            <person name="Joris B."/>
            <person name="Karamata D."/>
            <person name="Kasahara Y."/>
            <person name="Klaerr-Blanchard M."/>
            <person name="Klein C."/>
            <person name="Kobayashi Y."/>
            <person name="Koetter P."/>
            <person name="Koningstein G."/>
            <person name="Krogh S."/>
            <person name="Kumano M."/>
            <person name="Kurita K."/>
            <person name="Lapidus A."/>
            <person name="Lardinois S."/>
            <person name="Lauber J."/>
            <person name="Lazarevic V."/>
            <person name="Lee S.-M."/>
            <person name="Levine A."/>
            <person name="Liu H."/>
            <person name="Masuda S."/>
            <person name="Mauel C."/>
            <person name="Medigue C."/>
            <person name="Medina N."/>
            <person name="Mellado R.P."/>
            <person name="Mizuno M."/>
            <person name="Moestl D."/>
            <person name="Nakai S."/>
            <person name="Noback M."/>
            <person name="Noone D."/>
            <person name="O'Reilly M."/>
            <person name="Ogawa K."/>
            <person name="Ogiwara A."/>
            <person name="Oudega B."/>
            <person name="Park S.-H."/>
            <person name="Parro V."/>
            <person name="Pohl T.M."/>
            <person name="Portetelle D."/>
            <person name="Porwollik S."/>
            <person name="Prescott A.M."/>
            <person name="Presecan E."/>
            <person name="Pujic P."/>
            <person name="Purnelle B."/>
            <person name="Rapoport G."/>
            <person name="Rey M."/>
            <person name="Reynolds S."/>
            <person name="Rieger M."/>
            <person name="Rivolta C."/>
            <person name="Rocha E."/>
            <person name="Roche B."/>
            <person name="Rose M."/>
            <person name="Sadaie Y."/>
            <person name="Sato T."/>
            <person name="Scanlan E."/>
            <person name="Schleich S."/>
            <person name="Schroeter R."/>
            <person name="Scoffone F."/>
            <person name="Sekiguchi J."/>
            <person name="Sekowska A."/>
            <person name="Seror S.J."/>
            <person name="Serror P."/>
            <person name="Shin B.-S."/>
            <person name="Soldo B."/>
            <person name="Sorokin A."/>
            <person name="Tacconi E."/>
            <person name="Takagi T."/>
            <person name="Takahashi H."/>
            <person name="Takemaru K."/>
            <person name="Takeuchi M."/>
            <person name="Tamakoshi A."/>
            <person name="Tanaka T."/>
            <person name="Terpstra P."/>
            <person name="Tognoni A."/>
            <person name="Tosato V."/>
            <person name="Uchiyama S."/>
            <person name="Vandenbol M."/>
            <person name="Vannier F."/>
            <person name="Vassarotti A."/>
            <person name="Viari A."/>
            <person name="Wambutt R."/>
            <person name="Wedler E."/>
            <person name="Wedler H."/>
            <person name="Weitzenegger T."/>
            <person name="Winters P."/>
            <person name="Wipat A."/>
            <person name="Yamamoto H."/>
            <person name="Yamane K."/>
            <person name="Yasumoto K."/>
            <person name="Yata K."/>
            <person name="Yoshida K."/>
            <person name="Yoshikawa H.-F."/>
            <person name="Zumstein E."/>
            <person name="Yoshikawa H."/>
            <person name="Danchin A."/>
        </authorList>
    </citation>
    <scope>NUCLEOTIDE SEQUENCE [LARGE SCALE GENOMIC DNA]</scope>
    <source>
        <strain>168</strain>
    </source>
</reference>
<reference key="4">
    <citation type="journal article" date="1999" name="J. Bacteriol.">
        <title>Bacillus subtilis yckG and yckF encode two key enzymes of the ribulose monophosphate pathway used by methylotrophs, and yckH is required for their expression.</title>
        <authorList>
            <person name="Yasueda H."/>
            <person name="Kawahara Y."/>
            <person name="Sugimoto S."/>
        </authorList>
    </citation>
    <scope>CHARACTERIZATION</scope>
    <source>
        <strain>168</strain>
    </source>
</reference>
<name>HPS_BACSU</name>
<feature type="chain" id="PRO_0000212101" description="3-hexulose-6-phosphate synthase">
    <location>
        <begin position="1"/>
        <end position="210"/>
    </location>
</feature>
<feature type="sequence conflict" description="In Ref. 1 and 2." evidence="1" ref="1 2">
    <original>K</original>
    <variation>T</variation>
    <location>
        <position position="114"/>
    </location>
</feature>
<feature type="sequence conflict" description="In Ref. 1 and 2." evidence="1" ref="1 2">
    <original>GGIKLDTLPEVIQQKPDLVIVGGGITSAADKAETASKMKQLIVQG</original>
    <variation>AASNLIHCQK</variation>
    <location>
        <begin position="166"/>
        <end position="210"/>
    </location>
</feature>
<gene>
    <name type="primary">hxlA</name>
    <name type="synonym">yckG</name>
    <name type="ordered locus">BSU03460</name>
</gene>
<accession>P42405</accession>
<accession>O31477</accession>
<dbReference type="EC" id="4.1.2.43"/>
<dbReference type="EMBL" id="D30762">
    <property type="protein sequence ID" value="BAA06434.1"/>
    <property type="molecule type" value="Genomic_DNA"/>
</dbReference>
<dbReference type="EMBL" id="D50453">
    <property type="protein sequence ID" value="BAA08980.1"/>
    <property type="molecule type" value="Genomic_DNA"/>
</dbReference>
<dbReference type="EMBL" id="AL009126">
    <property type="protein sequence ID" value="CAB12140.1"/>
    <property type="molecule type" value="Genomic_DNA"/>
</dbReference>
<dbReference type="PIR" id="A69761">
    <property type="entry name" value="A69761"/>
</dbReference>
<dbReference type="RefSeq" id="NP_388228.1">
    <property type="nucleotide sequence ID" value="NC_000964.3"/>
</dbReference>
<dbReference type="RefSeq" id="WP_003246452.1">
    <property type="nucleotide sequence ID" value="NZ_OZ025638.1"/>
</dbReference>
<dbReference type="SMR" id="P42405"/>
<dbReference type="FunCoup" id="P42405">
    <property type="interactions" value="203"/>
</dbReference>
<dbReference type="STRING" id="224308.BSU03460"/>
<dbReference type="PaxDb" id="224308-BSU03460"/>
<dbReference type="EnsemblBacteria" id="CAB12140">
    <property type="protein sequence ID" value="CAB12140"/>
    <property type="gene ID" value="BSU_03460"/>
</dbReference>
<dbReference type="GeneID" id="938314"/>
<dbReference type="KEGG" id="bsu:BSU03460"/>
<dbReference type="PATRIC" id="fig|224308.179.peg.363"/>
<dbReference type="eggNOG" id="COG0269">
    <property type="taxonomic scope" value="Bacteria"/>
</dbReference>
<dbReference type="InParanoid" id="P42405"/>
<dbReference type="OrthoDB" id="43475at2"/>
<dbReference type="PhylomeDB" id="P42405"/>
<dbReference type="BioCyc" id="BSUB:BSU03460-MONOMER"/>
<dbReference type="UniPathway" id="UPA00294">
    <property type="reaction ID" value="UER00434"/>
</dbReference>
<dbReference type="Proteomes" id="UP000001570">
    <property type="component" value="Chromosome"/>
</dbReference>
<dbReference type="GO" id="GO:0033982">
    <property type="term" value="F:3-dehydro-L-gulonate-6-phosphate decarboxylase activity"/>
    <property type="evidence" value="ECO:0000318"/>
    <property type="project" value="GO_Central"/>
</dbReference>
<dbReference type="GO" id="GO:0043801">
    <property type="term" value="F:hexulose-6-phosphate synthase activity"/>
    <property type="evidence" value="ECO:0007669"/>
    <property type="project" value="UniProtKB-EC"/>
</dbReference>
<dbReference type="GO" id="GO:0004590">
    <property type="term" value="F:orotidine-5'-phosphate decarboxylase activity"/>
    <property type="evidence" value="ECO:0007669"/>
    <property type="project" value="InterPro"/>
</dbReference>
<dbReference type="GO" id="GO:0006207">
    <property type="term" value="P:'de novo' pyrimidine nucleobase biosynthetic process"/>
    <property type="evidence" value="ECO:0007669"/>
    <property type="project" value="InterPro"/>
</dbReference>
<dbReference type="GO" id="GO:0019647">
    <property type="term" value="P:formaldehyde assimilation via ribulose monophosphate cycle"/>
    <property type="evidence" value="ECO:0007669"/>
    <property type="project" value="UniProtKB-UniPathway"/>
</dbReference>
<dbReference type="GO" id="GO:0019854">
    <property type="term" value="P:L-ascorbic acid catabolic process"/>
    <property type="evidence" value="ECO:0000318"/>
    <property type="project" value="GO_Central"/>
</dbReference>
<dbReference type="GO" id="GO:0006730">
    <property type="term" value="P:one-carbon metabolic process"/>
    <property type="evidence" value="ECO:0007669"/>
    <property type="project" value="UniProtKB-KW"/>
</dbReference>
<dbReference type="GO" id="GO:0009636">
    <property type="term" value="P:response to toxic substance"/>
    <property type="evidence" value="ECO:0007669"/>
    <property type="project" value="UniProtKB-KW"/>
</dbReference>
<dbReference type="CDD" id="cd04726">
    <property type="entry name" value="KGPDC_HPS"/>
    <property type="match status" value="1"/>
</dbReference>
<dbReference type="FunFam" id="3.20.20.70:FF:000022">
    <property type="entry name" value="3-keto-L-gulonate-6-phosphate decarboxylase UlaD"/>
    <property type="match status" value="1"/>
</dbReference>
<dbReference type="Gene3D" id="3.20.20.70">
    <property type="entry name" value="Aldolase class I"/>
    <property type="match status" value="1"/>
</dbReference>
<dbReference type="InterPro" id="IPR017553">
    <property type="entry name" value="3-hexulose-6-phosphate_synth"/>
</dbReference>
<dbReference type="InterPro" id="IPR013785">
    <property type="entry name" value="Aldolase_TIM"/>
</dbReference>
<dbReference type="InterPro" id="IPR041710">
    <property type="entry name" value="HPS/KGPDC"/>
</dbReference>
<dbReference type="InterPro" id="IPR001754">
    <property type="entry name" value="OMPdeCOase_dom"/>
</dbReference>
<dbReference type="InterPro" id="IPR011060">
    <property type="entry name" value="RibuloseP-bd_barrel"/>
</dbReference>
<dbReference type="NCBIfam" id="TIGR03128">
    <property type="entry name" value="RuMP_HxlA"/>
    <property type="match status" value="1"/>
</dbReference>
<dbReference type="PANTHER" id="PTHR35039">
    <property type="entry name" value="3-KETO-L-GULONATE-6-PHOSPHATE DECARBOXYLASE SGBH-RELATED"/>
    <property type="match status" value="1"/>
</dbReference>
<dbReference type="PANTHER" id="PTHR35039:SF3">
    <property type="entry name" value="3-KETO-L-GULONATE-6-PHOSPHATE DECARBOXYLASE SGBH-RELATED"/>
    <property type="match status" value="1"/>
</dbReference>
<dbReference type="Pfam" id="PF00215">
    <property type="entry name" value="OMPdecase"/>
    <property type="match status" value="1"/>
</dbReference>
<dbReference type="SMART" id="SM00934">
    <property type="entry name" value="OMPdecase"/>
    <property type="match status" value="1"/>
</dbReference>
<dbReference type="SUPFAM" id="SSF51366">
    <property type="entry name" value="Ribulose-phoshate binding barrel"/>
    <property type="match status" value="1"/>
</dbReference>
<organism>
    <name type="scientific">Bacillus subtilis (strain 168)</name>
    <dbReference type="NCBI Taxonomy" id="224308"/>
    <lineage>
        <taxon>Bacteria</taxon>
        <taxon>Bacillati</taxon>
        <taxon>Bacillota</taxon>
        <taxon>Bacilli</taxon>
        <taxon>Bacillales</taxon>
        <taxon>Bacillaceae</taxon>
        <taxon>Bacillus</taxon>
    </lineage>
</organism>
<sequence length="210" mass="22572">MELQLALDLVNIPEAIELVKEVEQYIDVVEIGTPVVINEGLRAVKEIKEAFPQLKVLADLKIMDAGGYEIMKASEAGADIITVLGATDDATIKGAVEEAKKQKKKILVDMINVKDIESRAKEIDALGVDYICVHTGYDLQAEGKNSFEELTTIKNTVKNAKTAIAGGIKLDTLPEVIQQKPDLVIVGGGITSAADKAETASKMKQLIVQG</sequence>